<feature type="chain" id="PRO_1000056608" description="Ribosomal RNA small subunit methyltransferase A">
    <location>
        <begin position="1"/>
        <end position="275"/>
    </location>
</feature>
<feature type="binding site" evidence="1">
    <location>
        <position position="19"/>
    </location>
    <ligand>
        <name>S-adenosyl-L-methionine</name>
        <dbReference type="ChEBI" id="CHEBI:59789"/>
    </ligand>
</feature>
<feature type="binding site" evidence="1">
    <location>
        <position position="21"/>
    </location>
    <ligand>
        <name>S-adenosyl-L-methionine</name>
        <dbReference type="ChEBI" id="CHEBI:59789"/>
    </ligand>
</feature>
<feature type="binding site" evidence="1">
    <location>
        <position position="46"/>
    </location>
    <ligand>
        <name>S-adenosyl-L-methionine</name>
        <dbReference type="ChEBI" id="CHEBI:59789"/>
    </ligand>
</feature>
<feature type="binding site" evidence="1">
    <location>
        <position position="71"/>
    </location>
    <ligand>
        <name>S-adenosyl-L-methionine</name>
        <dbReference type="ChEBI" id="CHEBI:59789"/>
    </ligand>
</feature>
<feature type="binding site" evidence="1">
    <location>
        <position position="94"/>
    </location>
    <ligand>
        <name>S-adenosyl-L-methionine</name>
        <dbReference type="ChEBI" id="CHEBI:59789"/>
    </ligand>
</feature>
<feature type="binding site" evidence="1">
    <location>
        <position position="117"/>
    </location>
    <ligand>
        <name>S-adenosyl-L-methionine</name>
        <dbReference type="ChEBI" id="CHEBI:59789"/>
    </ligand>
</feature>
<proteinExistence type="inferred from homology"/>
<keyword id="KW-0963">Cytoplasm</keyword>
<keyword id="KW-0489">Methyltransferase</keyword>
<keyword id="KW-0694">RNA-binding</keyword>
<keyword id="KW-0698">rRNA processing</keyword>
<keyword id="KW-0949">S-adenosyl-L-methionine</keyword>
<keyword id="KW-0808">Transferase</keyword>
<comment type="function">
    <text evidence="1">Specifically dimethylates two adjacent adenosines (A1518 and A1519) in the loop of a conserved hairpin near the 3'-end of 16S rRNA in the 30S particle. May play a critical role in biogenesis of 30S subunits.</text>
</comment>
<comment type="catalytic activity">
    <reaction evidence="1">
        <text>adenosine(1518)/adenosine(1519) in 16S rRNA + 4 S-adenosyl-L-methionine = N(6)-dimethyladenosine(1518)/N(6)-dimethyladenosine(1519) in 16S rRNA + 4 S-adenosyl-L-homocysteine + 4 H(+)</text>
        <dbReference type="Rhea" id="RHEA:19609"/>
        <dbReference type="Rhea" id="RHEA-COMP:10232"/>
        <dbReference type="Rhea" id="RHEA-COMP:10233"/>
        <dbReference type="ChEBI" id="CHEBI:15378"/>
        <dbReference type="ChEBI" id="CHEBI:57856"/>
        <dbReference type="ChEBI" id="CHEBI:59789"/>
        <dbReference type="ChEBI" id="CHEBI:74411"/>
        <dbReference type="ChEBI" id="CHEBI:74493"/>
        <dbReference type="EC" id="2.1.1.182"/>
    </reaction>
</comment>
<comment type="subcellular location">
    <subcellularLocation>
        <location evidence="1">Cytoplasm</location>
    </subcellularLocation>
</comment>
<comment type="similarity">
    <text evidence="1">Belongs to the class I-like SAM-binding methyltransferase superfamily. rRNA adenine N(6)-methyltransferase family. RsmA subfamily.</text>
</comment>
<protein>
    <recommendedName>
        <fullName evidence="1">Ribosomal RNA small subunit methyltransferase A</fullName>
        <ecNumber evidence="1">2.1.1.182</ecNumber>
    </recommendedName>
    <alternativeName>
        <fullName evidence="1">16S rRNA (adenine(1518)-N(6)/adenine(1519)-N(6))-dimethyltransferase</fullName>
    </alternativeName>
    <alternativeName>
        <fullName evidence="1">16S rRNA dimethyladenosine transferase</fullName>
    </alternativeName>
    <alternativeName>
        <fullName evidence="1">16S rRNA dimethylase</fullName>
    </alternativeName>
    <alternativeName>
        <fullName evidence="1">S-adenosylmethionine-6-N', N'-adenosyl(rRNA) dimethyltransferase</fullName>
    </alternativeName>
</protein>
<sequence>MSNSRQHQGHFARKRFGQNFLVDHGVIDAIVAAIRPERGERMVEIGPGLGALTGPVIARLATPGSPLHAVELDRDLIGRLEQRFGELLELHAGDALTFDFGSIARPGGEPSLRIIGNLPYNISSPLLFHLMSFAPVVIDQHFMLQNEVVERMVAEPGTKAFSRLSVMLQYRYVMDKLIDVPPESFQPPPKVDSAIVRMIPHAPHELPAVDPAVLGEVVTAAFSQRRKMLRNTLGGYRDLVDFDALGFDLARRAEDIGVDEYVRVAQAVASARASG</sequence>
<reference key="1">
    <citation type="journal article" date="2010" name="Genome Biol. Evol.">
        <title>Continuing evolution of Burkholderia mallei through genome reduction and large-scale rearrangements.</title>
        <authorList>
            <person name="Losada L."/>
            <person name="Ronning C.M."/>
            <person name="DeShazer D."/>
            <person name="Woods D."/>
            <person name="Fedorova N."/>
            <person name="Kim H.S."/>
            <person name="Shabalina S.A."/>
            <person name="Pearson T.R."/>
            <person name="Brinkac L."/>
            <person name="Tan P."/>
            <person name="Nandi T."/>
            <person name="Crabtree J."/>
            <person name="Badger J."/>
            <person name="Beckstrom-Sternberg S."/>
            <person name="Saqib M."/>
            <person name="Schutzer S.E."/>
            <person name="Keim P."/>
            <person name="Nierman W.C."/>
        </authorList>
    </citation>
    <scope>NUCLEOTIDE SEQUENCE [LARGE SCALE GENOMIC DNA]</scope>
    <source>
        <strain>668</strain>
    </source>
</reference>
<organism>
    <name type="scientific">Burkholderia pseudomallei (strain 668)</name>
    <dbReference type="NCBI Taxonomy" id="320373"/>
    <lineage>
        <taxon>Bacteria</taxon>
        <taxon>Pseudomonadati</taxon>
        <taxon>Pseudomonadota</taxon>
        <taxon>Betaproteobacteria</taxon>
        <taxon>Burkholderiales</taxon>
        <taxon>Burkholderiaceae</taxon>
        <taxon>Burkholderia</taxon>
        <taxon>pseudomallei group</taxon>
    </lineage>
</organism>
<gene>
    <name evidence="1" type="primary">rsmA</name>
    <name evidence="1" type="synonym">ksgA</name>
    <name type="ordered locus">BURPS668_0695</name>
</gene>
<dbReference type="EC" id="2.1.1.182" evidence="1"/>
<dbReference type="EMBL" id="CP000570">
    <property type="protein sequence ID" value="ABN82975.1"/>
    <property type="molecule type" value="Genomic_DNA"/>
</dbReference>
<dbReference type="RefSeq" id="WP_004534217.1">
    <property type="nucleotide sequence ID" value="NC_009074.1"/>
</dbReference>
<dbReference type="SMR" id="A3N5X6"/>
<dbReference type="GeneID" id="93059173"/>
<dbReference type="KEGG" id="bpd:BURPS668_0695"/>
<dbReference type="HOGENOM" id="CLU_041220_0_1_4"/>
<dbReference type="GO" id="GO:0005829">
    <property type="term" value="C:cytosol"/>
    <property type="evidence" value="ECO:0007669"/>
    <property type="project" value="TreeGrafter"/>
</dbReference>
<dbReference type="GO" id="GO:0052908">
    <property type="term" value="F:16S rRNA (adenine(1518)-N(6)/adenine(1519)-N(6))-dimethyltransferase activity"/>
    <property type="evidence" value="ECO:0007669"/>
    <property type="project" value="UniProtKB-EC"/>
</dbReference>
<dbReference type="GO" id="GO:0003723">
    <property type="term" value="F:RNA binding"/>
    <property type="evidence" value="ECO:0007669"/>
    <property type="project" value="UniProtKB-KW"/>
</dbReference>
<dbReference type="FunFam" id="1.10.8.100:FF:000001">
    <property type="entry name" value="Ribosomal RNA small subunit methyltransferase A"/>
    <property type="match status" value="1"/>
</dbReference>
<dbReference type="Gene3D" id="1.10.8.100">
    <property type="entry name" value="Ribosomal RNA adenine dimethylase-like, domain 2"/>
    <property type="match status" value="1"/>
</dbReference>
<dbReference type="Gene3D" id="3.40.50.150">
    <property type="entry name" value="Vaccinia Virus protein VP39"/>
    <property type="match status" value="1"/>
</dbReference>
<dbReference type="HAMAP" id="MF_00607">
    <property type="entry name" value="16SrRNA_methyltr_A"/>
    <property type="match status" value="1"/>
</dbReference>
<dbReference type="InterPro" id="IPR001737">
    <property type="entry name" value="KsgA/Erm"/>
</dbReference>
<dbReference type="InterPro" id="IPR023165">
    <property type="entry name" value="rRNA_Ade_diMease-like_C"/>
</dbReference>
<dbReference type="InterPro" id="IPR020598">
    <property type="entry name" value="rRNA_Ade_methylase_Trfase_N"/>
</dbReference>
<dbReference type="InterPro" id="IPR011530">
    <property type="entry name" value="rRNA_adenine_dimethylase"/>
</dbReference>
<dbReference type="InterPro" id="IPR029063">
    <property type="entry name" value="SAM-dependent_MTases_sf"/>
</dbReference>
<dbReference type="NCBIfam" id="TIGR00755">
    <property type="entry name" value="ksgA"/>
    <property type="match status" value="1"/>
</dbReference>
<dbReference type="PANTHER" id="PTHR11727">
    <property type="entry name" value="DIMETHYLADENOSINE TRANSFERASE"/>
    <property type="match status" value="1"/>
</dbReference>
<dbReference type="PANTHER" id="PTHR11727:SF7">
    <property type="entry name" value="DIMETHYLADENOSINE TRANSFERASE-RELATED"/>
    <property type="match status" value="1"/>
</dbReference>
<dbReference type="Pfam" id="PF00398">
    <property type="entry name" value="RrnaAD"/>
    <property type="match status" value="1"/>
</dbReference>
<dbReference type="SMART" id="SM00650">
    <property type="entry name" value="rADc"/>
    <property type="match status" value="1"/>
</dbReference>
<dbReference type="SUPFAM" id="SSF53335">
    <property type="entry name" value="S-adenosyl-L-methionine-dependent methyltransferases"/>
    <property type="match status" value="1"/>
</dbReference>
<dbReference type="PROSITE" id="PS51689">
    <property type="entry name" value="SAM_RNA_A_N6_MT"/>
    <property type="match status" value="1"/>
</dbReference>
<accession>A3N5X6</accession>
<evidence type="ECO:0000255" key="1">
    <source>
        <dbReference type="HAMAP-Rule" id="MF_00607"/>
    </source>
</evidence>
<name>RSMA_BURP6</name>